<keyword id="KW-0472">Membrane</keyword>
<keyword id="KW-1185">Reference proteome</keyword>
<keyword id="KW-0812">Transmembrane</keyword>
<keyword id="KW-1133">Transmembrane helix</keyword>
<organismHost>
    <name type="scientific">Cicer arietinum</name>
    <name type="common">Chickpea</name>
    <name type="synonym">Garbanzo</name>
    <dbReference type="NCBI Taxonomy" id="3827"/>
</organismHost>
<organismHost>
    <name type="scientific">Lens culinaris</name>
    <name type="common">Lentil</name>
    <name type="synonym">Cicer lens</name>
    <dbReference type="NCBI Taxonomy" id="3864"/>
</organismHost>
<organismHost>
    <name type="scientific">Phaseolus vulgaris</name>
    <name type="common">Kidney bean</name>
    <name type="synonym">French bean</name>
    <dbReference type="NCBI Taxonomy" id="3885"/>
</organismHost>
<organismHost>
    <name type="scientific">Vicia faba</name>
    <name type="common">Broad bean</name>
    <name type="synonym">Faba vulgaris</name>
    <dbReference type="NCBI Taxonomy" id="3906"/>
</organismHost>
<gene>
    <name type="primary">DNA-U4</name>
    <name type="synonym">C12</name>
</gene>
<comment type="subcellular location">
    <subcellularLocation>
        <location evidence="2">Membrane</location>
        <topology evidence="2">Single-pass membrane protein</topology>
    </subcellularLocation>
</comment>
<comment type="similarity">
    <text evidence="2">Belongs to the nanovirus U4 protein family.</text>
</comment>
<comment type="caution">
    <text evidence="2">It is uncertain whether Met-1 or Met-24 is the initiator.</text>
</comment>
<protein>
    <recommendedName>
        <fullName>Protein U4</fullName>
    </recommendedName>
</protein>
<reference key="1">
    <citation type="journal article" date="1999" name="Virology">
        <title>Faba bean necrotic yellows virus (genus Nanovirus) requires a helper factor for its aphid transmission.</title>
        <authorList>
            <person name="Franz A.W."/>
            <person name="van der Wilk F."/>
            <person name="Verbeek M."/>
            <person name="Dullemans A.M."/>
            <person name="van den Heuvel J.F."/>
        </authorList>
    </citation>
    <scope>NUCLEOTIDE SEQUENCE [GENOMIC DNA]</scope>
</reference>
<feature type="chain" id="PRO_0000378547" description="Protein U4">
    <location>
        <begin position="1"/>
        <end position="106"/>
    </location>
</feature>
<feature type="transmembrane region" description="Helical" evidence="1">
    <location>
        <begin position="5"/>
        <end position="25"/>
    </location>
</feature>
<organism>
    <name type="scientific">Faba bean necrotic yellows virus (isolate Syrian SV292-88)</name>
    <name type="common">FBNYV</name>
    <dbReference type="NCBI Taxonomy" id="291604"/>
    <lineage>
        <taxon>Viruses</taxon>
        <taxon>Monodnaviria</taxon>
        <taxon>Shotokuvirae</taxon>
        <taxon>Cressdnaviricota</taxon>
        <taxon>Arfiviricetes</taxon>
        <taxon>Mulpavirales</taxon>
        <taxon>Nanoviridae</taxon>
        <taxon>Nanovirus</taxon>
        <taxon>Faba bean necrotic yellows virus</taxon>
    </lineage>
</organism>
<evidence type="ECO:0000255" key="1"/>
<evidence type="ECO:0000305" key="2"/>
<sequence>MECRFFISIILFVVLLNPSLIINMVLGYVLGSLFRSNYSRLKKLLSGNKNENREEEDEHISQMKNPFEDAESDVLQHLKTLGLETKVEGDDLEYLQRLWESMSSKK</sequence>
<name>U4_FBNY2</name>
<dbReference type="EMBL" id="AF159704">
    <property type="protein sequence ID" value="AAF01569.1"/>
    <property type="molecule type" value="Genomic_DNA"/>
</dbReference>
<dbReference type="SMR" id="Q9QIZ6"/>
<dbReference type="Proteomes" id="UP001515460">
    <property type="component" value="Genome"/>
</dbReference>
<dbReference type="GO" id="GO:0016020">
    <property type="term" value="C:membrane"/>
    <property type="evidence" value="ECO:0007669"/>
    <property type="project" value="UniProtKB-SubCell"/>
</dbReference>
<proteinExistence type="inferred from homology"/>
<accession>Q9QIZ6</accession>